<comment type="function">
    <text evidence="1 3 4 5">Kinase that plays a role in the adaptation to sustained nitrogen starvation (PubMed:26621053). May act by indirectly repressing the transcription of the two toxin/antitoxin modules mqsR/mqsA and dinJ/yafQ, which positively impacts the expression of rpoS, the master regulator of the general bacterial stress response (PubMed:26621053). In vitro, can phosphorylate the isocitrate lyase AceA only in the presence of malate, suggesting that it may play a role during glucose to malate shift (PubMed:33889145). Displays autokinase and casein kinase activities in vitro (PubMed:18276156). It can also phosphorylate specifically a 65 kDa unidentified cytoplasmic protein (Ref.5).</text>
</comment>
<comment type="catalytic activity">
    <reaction evidence="4">
        <text>L-seryl-[protein] + ATP = O-phospho-L-seryl-[protein] + ADP + H(+)</text>
        <dbReference type="Rhea" id="RHEA:17989"/>
        <dbReference type="Rhea" id="RHEA-COMP:9863"/>
        <dbReference type="Rhea" id="RHEA-COMP:11604"/>
        <dbReference type="ChEBI" id="CHEBI:15378"/>
        <dbReference type="ChEBI" id="CHEBI:29999"/>
        <dbReference type="ChEBI" id="CHEBI:30616"/>
        <dbReference type="ChEBI" id="CHEBI:83421"/>
        <dbReference type="ChEBI" id="CHEBI:456216"/>
        <dbReference type="EC" id="2.7.11.1"/>
    </reaction>
</comment>
<comment type="catalytic activity">
    <reaction evidence="4">
        <text>L-threonyl-[protein] + ATP = O-phospho-L-threonyl-[protein] + ADP + H(+)</text>
        <dbReference type="Rhea" id="RHEA:46608"/>
        <dbReference type="Rhea" id="RHEA-COMP:11060"/>
        <dbReference type="Rhea" id="RHEA-COMP:11605"/>
        <dbReference type="ChEBI" id="CHEBI:15378"/>
        <dbReference type="ChEBI" id="CHEBI:30013"/>
        <dbReference type="ChEBI" id="CHEBI:30616"/>
        <dbReference type="ChEBI" id="CHEBI:61977"/>
        <dbReference type="ChEBI" id="CHEBI:456216"/>
        <dbReference type="EC" id="2.7.11.1"/>
    </reaction>
</comment>
<comment type="activity regulation">
    <text evidence="1">Autokinase and casein kinase activities are enhanced in the presence of Mn(2+) (PubMed:18276156). Mg(2+) and Ca(2+) are 2- to 3-fold less efficient than Mn(2+) in stimulating the autokinase activity (PubMed:18276156).</text>
</comment>
<comment type="subunit">
    <text evidence="1">Monomer.</text>
</comment>
<comment type="subcellular location">
    <subcellularLocation>
        <location evidence="10">Cytoplasm</location>
    </subcellularLocation>
</comment>
<comment type="induction">
    <text evidence="2 3">Expression is probably regulated by NtrC, which binds to the promoter region of the yeaGH operon during nitrogen starvation (PubMed:24947454). Expressed in nitrogen-starved cells shortly after sensing nitrogen starvation (PubMed:26621053). It appears to be continuously expressed for up to 24 hours into nitrogen starvation (PubMed:26621053).</text>
</comment>
<comment type="disruption phenotype">
    <text evidence="3 4 5">The deletion mutant displays an overall compromised ability to survive sustained periods of nitrogen starvation (PubMed:26621053). It displays higher metabolic activity than the wild-type strain following sustained nitrogen starvation (PubMed:26621053). Absence of the gene leads to increased expression of the toxin-antitoxin systems mqsR/mqsA and dinJ/yafQ (PubMed:26621053). Inactivation of the gene leads to shortening the lag phase of growth during transition from glucose to malate as the main carbon source (PubMed:33889145). It also affects phosphorylation of several proteins during glucose to malate shift, including AceA (PubMed:33889145). The mutant displays growth defects after the end of the exponential phase, but it does not display any viability defect after a hyperosmotic stress or a mild acid stress (Ref.5).</text>
</comment>
<comment type="similarity">
    <text evidence="9">Belongs to the PrkA family.</text>
</comment>
<dbReference type="EC" id="2.7.11.1" evidence="4"/>
<dbReference type="EMBL" id="U00096">
    <property type="protein sequence ID" value="AAC74853.1"/>
    <property type="molecule type" value="Genomic_DNA"/>
</dbReference>
<dbReference type="EMBL" id="AP009048">
    <property type="protein sequence ID" value="BAA15580.1"/>
    <property type="molecule type" value="Genomic_DNA"/>
</dbReference>
<dbReference type="PIR" id="G64938">
    <property type="entry name" value="G64938"/>
</dbReference>
<dbReference type="RefSeq" id="NP_416297.1">
    <property type="nucleotide sequence ID" value="NC_000913.3"/>
</dbReference>
<dbReference type="RefSeq" id="WP_001019882.1">
    <property type="nucleotide sequence ID" value="NZ_STEB01000009.1"/>
</dbReference>
<dbReference type="BioGRID" id="4260312">
    <property type="interactions" value="20"/>
</dbReference>
<dbReference type="DIP" id="DIP-35826N"/>
<dbReference type="FunCoup" id="P0ACY3">
    <property type="interactions" value="56"/>
</dbReference>
<dbReference type="IntAct" id="P0ACY3">
    <property type="interactions" value="7"/>
</dbReference>
<dbReference type="STRING" id="511145.b1783"/>
<dbReference type="jPOST" id="P0ACY3"/>
<dbReference type="PaxDb" id="511145-b1783"/>
<dbReference type="EnsemblBacteria" id="AAC74853">
    <property type="protein sequence ID" value="AAC74853"/>
    <property type="gene ID" value="b1783"/>
</dbReference>
<dbReference type="GeneID" id="86946181"/>
<dbReference type="GeneID" id="946297"/>
<dbReference type="KEGG" id="ecj:JW1772"/>
<dbReference type="KEGG" id="eco:b1783"/>
<dbReference type="KEGG" id="ecoc:C3026_10170"/>
<dbReference type="PATRIC" id="fig|1411691.4.peg.471"/>
<dbReference type="EchoBASE" id="EB3266"/>
<dbReference type="eggNOG" id="COG2766">
    <property type="taxonomic scope" value="Bacteria"/>
</dbReference>
<dbReference type="HOGENOM" id="CLU_028588_1_0_6"/>
<dbReference type="InParanoid" id="P0ACY3"/>
<dbReference type="OMA" id="DFYGMED"/>
<dbReference type="OrthoDB" id="9761914at2"/>
<dbReference type="PhylomeDB" id="P0ACY3"/>
<dbReference type="BioCyc" id="EcoCyc:G6969-MONOMER"/>
<dbReference type="BioCyc" id="MetaCyc:G6969-MONOMER"/>
<dbReference type="PRO" id="PR:P0ACY3"/>
<dbReference type="Proteomes" id="UP000000625">
    <property type="component" value="Chromosome"/>
</dbReference>
<dbReference type="GO" id="GO:0004672">
    <property type="term" value="F:protein kinase activity"/>
    <property type="evidence" value="ECO:0000314"/>
    <property type="project" value="EcoCyc"/>
</dbReference>
<dbReference type="GO" id="GO:0006995">
    <property type="term" value="P:cellular response to nitrogen starvation"/>
    <property type="evidence" value="ECO:0000315"/>
    <property type="project" value="EcoCyc"/>
</dbReference>
<dbReference type="FunFam" id="3.40.50.300:FF:000609">
    <property type="entry name" value="PrkA family serine protein kinase"/>
    <property type="match status" value="1"/>
</dbReference>
<dbReference type="Gene3D" id="3.40.50.300">
    <property type="entry name" value="P-loop containing nucleotide triphosphate hydrolases"/>
    <property type="match status" value="1"/>
</dbReference>
<dbReference type="InterPro" id="IPR027417">
    <property type="entry name" value="P-loop_NTPase"/>
</dbReference>
<dbReference type="InterPro" id="IPR013153">
    <property type="entry name" value="Prk_AAA_dom"/>
</dbReference>
<dbReference type="InterPro" id="IPR010650">
    <property type="entry name" value="PrkA_C_dom"/>
</dbReference>
<dbReference type="InterPro" id="IPR016230">
    <property type="entry name" value="Ser_kinase_PrkA"/>
</dbReference>
<dbReference type="NCBIfam" id="NF011999">
    <property type="entry name" value="PRK15455.1"/>
    <property type="match status" value="1"/>
</dbReference>
<dbReference type="PANTHER" id="PTHR30267">
    <property type="entry name" value="PROTEIN KINASE PRKA"/>
    <property type="match status" value="1"/>
</dbReference>
<dbReference type="PANTHER" id="PTHR30267:SF2">
    <property type="entry name" value="PROTEIN PRKA"/>
    <property type="match status" value="1"/>
</dbReference>
<dbReference type="Pfam" id="PF08298">
    <property type="entry name" value="AAA_PrkA"/>
    <property type="match status" value="1"/>
</dbReference>
<dbReference type="Pfam" id="PF06798">
    <property type="entry name" value="PrkA"/>
    <property type="match status" value="1"/>
</dbReference>
<dbReference type="PIRSF" id="PIRSF000549">
    <property type="entry name" value="Ser_prot_kin"/>
    <property type="match status" value="1"/>
</dbReference>
<dbReference type="SMART" id="SM00763">
    <property type="entry name" value="AAA_PrkA"/>
    <property type="match status" value="1"/>
</dbReference>
<dbReference type="SUPFAM" id="SSF52540">
    <property type="entry name" value="P-loop containing nucleoside triphosphate hydrolases"/>
    <property type="match status" value="1"/>
</dbReference>
<protein>
    <recommendedName>
        <fullName evidence="7">Serine/threonine kinase YeaG</fullName>
        <shortName evidence="8">Ser/Thr kinase YeaG</shortName>
        <ecNumber evidence="4">2.7.11.1</ecNumber>
    </recommendedName>
    <alternativeName>
        <fullName evidence="9">Protein kinase YeaG</fullName>
    </alternativeName>
    <alternativeName>
        <fullName evidence="6">Stress kinase YeaG</fullName>
    </alternativeName>
</protein>
<reference key="1">
    <citation type="journal article" date="1996" name="DNA Res.">
        <title>A 460-kb DNA sequence of the Escherichia coli K-12 genome corresponding to the 40.1-50.0 min region on the linkage map.</title>
        <authorList>
            <person name="Itoh T."/>
            <person name="Aiba H."/>
            <person name="Baba T."/>
            <person name="Fujita K."/>
            <person name="Hayashi K."/>
            <person name="Inada T."/>
            <person name="Isono K."/>
            <person name="Kasai H."/>
            <person name="Kimura S."/>
            <person name="Kitakawa M."/>
            <person name="Kitagawa M."/>
            <person name="Makino K."/>
            <person name="Miki T."/>
            <person name="Mizobuchi K."/>
            <person name="Mori H."/>
            <person name="Mori T."/>
            <person name="Motomura K."/>
            <person name="Nakade S."/>
            <person name="Nakamura Y."/>
            <person name="Nashimoto H."/>
            <person name="Nishio Y."/>
            <person name="Oshima T."/>
            <person name="Saito N."/>
            <person name="Sampei G."/>
            <person name="Seki Y."/>
            <person name="Sivasundaram S."/>
            <person name="Tagami H."/>
            <person name="Takeda J."/>
            <person name="Takemoto K."/>
            <person name="Wada C."/>
            <person name="Yamamoto Y."/>
            <person name="Horiuchi T."/>
        </authorList>
    </citation>
    <scope>NUCLEOTIDE SEQUENCE [LARGE SCALE GENOMIC DNA]</scope>
    <source>
        <strain>K12 / W3110 / ATCC 27325 / DSM 5911</strain>
    </source>
</reference>
<reference key="2">
    <citation type="journal article" date="1997" name="Science">
        <title>The complete genome sequence of Escherichia coli K-12.</title>
        <authorList>
            <person name="Blattner F.R."/>
            <person name="Plunkett G. III"/>
            <person name="Bloch C.A."/>
            <person name="Perna N.T."/>
            <person name="Burland V."/>
            <person name="Riley M."/>
            <person name="Collado-Vides J."/>
            <person name="Glasner J.D."/>
            <person name="Rode C.K."/>
            <person name="Mayhew G.F."/>
            <person name="Gregor J."/>
            <person name="Davis N.W."/>
            <person name="Kirkpatrick H.A."/>
            <person name="Goeden M.A."/>
            <person name="Rose D.J."/>
            <person name="Mau B."/>
            <person name="Shao Y."/>
        </authorList>
    </citation>
    <scope>NUCLEOTIDE SEQUENCE [LARGE SCALE GENOMIC DNA]</scope>
    <source>
        <strain>K12 / MG1655 / ATCC 47076</strain>
    </source>
</reference>
<reference key="3">
    <citation type="journal article" date="2006" name="Mol. Syst. Biol.">
        <title>Highly accurate genome sequences of Escherichia coli K-12 strains MG1655 and W3110.</title>
        <authorList>
            <person name="Hayashi K."/>
            <person name="Morooka N."/>
            <person name="Yamamoto Y."/>
            <person name="Fujita K."/>
            <person name="Isono K."/>
            <person name="Choi S."/>
            <person name="Ohtsubo E."/>
            <person name="Baba T."/>
            <person name="Wanner B.L."/>
            <person name="Mori H."/>
            <person name="Horiuchi T."/>
        </authorList>
    </citation>
    <scope>NUCLEOTIDE SEQUENCE [LARGE SCALE GENOMIC DNA]</scope>
    <source>
        <strain>K12 / W3110 / ATCC 27325 / DSM 5911</strain>
    </source>
</reference>
<reference key="4">
    <citation type="journal article" date="2008" name="Protein Expr. Purif.">
        <title>Cloning, expression, purification and characterization of the stress kinase YeaG from Escherichia coli.</title>
        <authorList>
            <person name="Tagourti J."/>
            <person name="Landoulsi A."/>
            <person name="Richarme G."/>
        </authorList>
    </citation>
    <scope>PROTEIN SEQUENCE OF 1-7</scope>
    <scope>FUNCTION AS A PROTEIN KINASE</scope>
    <scope>ACTIVITY REGULATION</scope>
    <scope>SUBUNIT</scope>
    <source>
        <strain>K12 / MG1655 / ATCC 47076</strain>
    </source>
</reference>
<reference key="5">
    <citation type="journal article" date="2011" name="Ann. Microbiol.">
        <title>Phosphorylation of a 65 kDa cytoplasmic protein by the Escherichia coli YeaG kinase.</title>
        <authorList>
            <person name="Tagourti J."/>
            <person name="Gautier V."/>
            <person name="Beaujouan J.C."/>
            <person name="Gauchy C."/>
            <person name="Landoulsi A."/>
            <person name="Richarme G."/>
        </authorList>
    </citation>
    <scope>FUNCTION AS A PROTEIN KINASE</scope>
    <scope>DISRUPTION PHENOTYPE</scope>
    <source>
        <strain>K12 / BW25113</strain>
    </source>
</reference>
<reference key="6">
    <citation type="journal article" date="2014" name="Nat. Commun.">
        <title>Nitrogen stress response and stringent response are coupled in Escherichia coli.</title>
        <authorList>
            <person name="Brown D.R."/>
            <person name="Barton G."/>
            <person name="Pan Z."/>
            <person name="Buck M."/>
            <person name="Wigneshweraraj S."/>
        </authorList>
    </citation>
    <scope>INDUCTION</scope>
</reference>
<reference key="7">
    <citation type="journal article" date="2015" name="Sci. Rep.">
        <title>Adaptation to sustained nitrogen starvation by Escherichia coli requires the eukaryote-like serine/threonine kinase YeaG.</title>
        <authorList>
            <person name="Figueira R."/>
            <person name="Brown D.R."/>
            <person name="Ferreira D."/>
            <person name="Eldridge M.J."/>
            <person name="Burchell L."/>
            <person name="Pan Z."/>
            <person name="Helaine S."/>
            <person name="Wigneshweraraj S."/>
        </authorList>
    </citation>
    <scope>FUNCTION</scope>
    <scope>INDUCTION</scope>
    <scope>DISRUPTION PHENOTYPE</scope>
    <scope>MUTAGENESIS OF LYS-116; ARG-232 AND LYS-426</scope>
    <source>
        <strain>K12</strain>
    </source>
</reference>
<reference key="8">
    <citation type="journal article" date="2021" name="Front. Microbiol.">
        <title>Phosphoproteome Study of Escherichia coli Devoid of Ser/Thr Kinase YeaG During the Metabolic Shift From Glucose to Malate.</title>
        <authorList>
            <person name="Sultan A."/>
            <person name="Jers C."/>
            <person name="Ganief T.A."/>
            <person name="Shi L."/>
            <person name="Senissar M."/>
            <person name="Koehler J.B."/>
            <person name="Macek B."/>
            <person name="Mijakovic I."/>
        </authorList>
    </citation>
    <scope>FUNCTION</scope>
    <scope>CATALYTIC ACTIVITY</scope>
    <scope>DISRUPTION PHENOTYPE</scope>
    <source>
        <strain>K12 / MG1655 / ATCC 47076</strain>
    </source>
</reference>
<keyword id="KW-0963">Cytoplasm</keyword>
<keyword id="KW-0903">Direct protein sequencing</keyword>
<keyword id="KW-0418">Kinase</keyword>
<keyword id="KW-1185">Reference proteome</keyword>
<keyword id="KW-0346">Stress response</keyword>
<keyword id="KW-0808">Transferase</keyword>
<feature type="chain" id="PRO_0000169012" description="Serine/threonine kinase YeaG">
    <location>
        <begin position="1"/>
        <end position="644"/>
    </location>
</feature>
<feature type="mutagenesis site" description="Loss of activity. Cannot complement the deletion mutant." evidence="3">
    <original>K</original>
    <variation>A</variation>
    <location>
        <position position="116"/>
    </location>
</feature>
<feature type="mutagenesis site" description="Loss of activity. Cannot complement the deletion mutant." evidence="3">
    <original>R</original>
    <variation>A</variation>
    <location>
        <position position="232"/>
    </location>
</feature>
<feature type="mutagenesis site" description="Loss of activity. Cannot complement the deletion mutant." evidence="3">
    <original>K</original>
    <variation>A</variation>
    <location>
        <position position="426"/>
    </location>
</feature>
<organism>
    <name type="scientific">Escherichia coli (strain K12)</name>
    <dbReference type="NCBI Taxonomy" id="83333"/>
    <lineage>
        <taxon>Bacteria</taxon>
        <taxon>Pseudomonadati</taxon>
        <taxon>Pseudomonadota</taxon>
        <taxon>Gammaproteobacteria</taxon>
        <taxon>Enterobacterales</taxon>
        <taxon>Enterobacteriaceae</taxon>
        <taxon>Escherichia</taxon>
    </lineage>
</organism>
<gene>
    <name type="primary">yeaG</name>
    <name type="ordered locus">b1783</name>
    <name type="ordered locus">JW1772</name>
</gene>
<accession>P0ACY3</accession>
<accession>O07963</accession>
<accession>P77391</accession>
<evidence type="ECO:0000269" key="1">
    <source>
    </source>
</evidence>
<evidence type="ECO:0000269" key="2">
    <source>
    </source>
</evidence>
<evidence type="ECO:0000269" key="3">
    <source>
    </source>
</evidence>
<evidence type="ECO:0000269" key="4">
    <source>
    </source>
</evidence>
<evidence type="ECO:0000269" key="5">
    <source ref="5"/>
</evidence>
<evidence type="ECO:0000303" key="6">
    <source>
    </source>
</evidence>
<evidence type="ECO:0000303" key="7">
    <source>
    </source>
</evidence>
<evidence type="ECO:0000303" key="8">
    <source>
    </source>
</evidence>
<evidence type="ECO:0000305" key="9"/>
<evidence type="ECO:0000305" key="10">
    <source>
    </source>
</evidence>
<name>YEAG_ECOLI</name>
<proteinExistence type="evidence at protein level"/>
<sequence length="644" mass="74480">MNIFDHYRQRYEAAKDEEFTLQEFLTTCRQDRSAYANAAERLLMAIGEPVMVDTAQEPRLSRLFSNRVIARYPAFEEFYGMEDAIEQIVSYLKHAAQGLEEKKQILYLLGPVGGGKSSLAERLKSLMQLVPIYVLSANGERSPVNDHPFCLFNPQEDAQILEKEYGIPRRYLGTIMSPWAAKRLHEFGGDITKFRVVKVWPSILQQIAIAKTEPGDENNQDISALVGKVDIRKLEHYAQNDPDAYGYSGALCRANQGIMEFVEMFKAPIKVLHPLLTATQEGNYNGTEGISALPFNGIILAHSNESEWVTFRNNKNNEAFLDRVYIVKVPYCLRISEEIKIYEKLLNHSELTHAPCAPGTLETLSRFSILSRLKEPENSSIYSKMRVYDGESLKDTDPKAKSYQEYRDYAGVDEGMNGLSTRFAFKILSRVFNFDHVEVAANPVHLFYVLEQQIEREQFPQEQAERYLEFLKGYLIPKYAEFIGKEIQTAYLESYSEYGQNIFDRYVTYADFWIQDQEYRDPDTGQLFDRESLNAELEKIEKPAGISNPKDFRNEIVNFVLRARANNSGRNPNWTSYEKLRTVIEKKMFSNTEELLPVISFNAKTSTDEQKKHDDFVDRMMEKGYTRKQVRLLCEWYLRVRKSS</sequence>